<name>FPG_YERPG</name>
<reference key="1">
    <citation type="journal article" date="2010" name="J. Bacteriol.">
        <title>Genome sequence of the deep-rooted Yersinia pestis strain Angola reveals new insights into the evolution and pangenome of the plague bacterium.</title>
        <authorList>
            <person name="Eppinger M."/>
            <person name="Worsham P.L."/>
            <person name="Nikolich M.P."/>
            <person name="Riley D.R."/>
            <person name="Sebastian Y."/>
            <person name="Mou S."/>
            <person name="Achtman M."/>
            <person name="Lindler L.E."/>
            <person name="Ravel J."/>
        </authorList>
    </citation>
    <scope>NUCLEOTIDE SEQUENCE [LARGE SCALE GENOMIC DNA]</scope>
    <source>
        <strain>Angola</strain>
    </source>
</reference>
<dbReference type="EC" id="3.2.2.23" evidence="2"/>
<dbReference type="EC" id="4.2.99.18" evidence="2"/>
<dbReference type="EMBL" id="CP000901">
    <property type="protein sequence ID" value="ABX85219.1"/>
    <property type="molecule type" value="Genomic_DNA"/>
</dbReference>
<dbReference type="RefSeq" id="WP_002208989.1">
    <property type="nucleotide sequence ID" value="NZ_CP009935.1"/>
</dbReference>
<dbReference type="SMR" id="A9R677"/>
<dbReference type="GeneID" id="57974538"/>
<dbReference type="KEGG" id="ypg:YpAngola_A0058"/>
<dbReference type="PATRIC" id="fig|349746.12.peg.1001"/>
<dbReference type="GO" id="GO:0034039">
    <property type="term" value="F:8-oxo-7,8-dihydroguanine DNA N-glycosylase activity"/>
    <property type="evidence" value="ECO:0007669"/>
    <property type="project" value="TreeGrafter"/>
</dbReference>
<dbReference type="GO" id="GO:0140078">
    <property type="term" value="F:class I DNA-(apurinic or apyrimidinic site) endonuclease activity"/>
    <property type="evidence" value="ECO:0007669"/>
    <property type="project" value="UniProtKB-EC"/>
</dbReference>
<dbReference type="GO" id="GO:0003684">
    <property type="term" value="F:damaged DNA binding"/>
    <property type="evidence" value="ECO:0007669"/>
    <property type="project" value="InterPro"/>
</dbReference>
<dbReference type="GO" id="GO:0008270">
    <property type="term" value="F:zinc ion binding"/>
    <property type="evidence" value="ECO:0007669"/>
    <property type="project" value="UniProtKB-UniRule"/>
</dbReference>
<dbReference type="GO" id="GO:0006284">
    <property type="term" value="P:base-excision repair"/>
    <property type="evidence" value="ECO:0007669"/>
    <property type="project" value="InterPro"/>
</dbReference>
<dbReference type="CDD" id="cd08966">
    <property type="entry name" value="EcFpg-like_N"/>
    <property type="match status" value="1"/>
</dbReference>
<dbReference type="FunFam" id="1.10.8.50:FF:000003">
    <property type="entry name" value="Formamidopyrimidine-DNA glycosylase"/>
    <property type="match status" value="1"/>
</dbReference>
<dbReference type="FunFam" id="3.20.190.10:FF:000001">
    <property type="entry name" value="Formamidopyrimidine-DNA glycosylase"/>
    <property type="match status" value="1"/>
</dbReference>
<dbReference type="Gene3D" id="1.10.8.50">
    <property type="match status" value="1"/>
</dbReference>
<dbReference type="Gene3D" id="3.20.190.10">
    <property type="entry name" value="MutM-like, N-terminal"/>
    <property type="match status" value="1"/>
</dbReference>
<dbReference type="HAMAP" id="MF_00103">
    <property type="entry name" value="Fapy_DNA_glycosyl"/>
    <property type="match status" value="1"/>
</dbReference>
<dbReference type="InterPro" id="IPR015886">
    <property type="entry name" value="DNA_glyclase/AP_lyase_DNA-bd"/>
</dbReference>
<dbReference type="InterPro" id="IPR015887">
    <property type="entry name" value="DNA_glyclase_Znf_dom_DNA_BS"/>
</dbReference>
<dbReference type="InterPro" id="IPR020629">
    <property type="entry name" value="Formamido-pyr_DNA_Glyclase"/>
</dbReference>
<dbReference type="InterPro" id="IPR012319">
    <property type="entry name" value="FPG_cat"/>
</dbReference>
<dbReference type="InterPro" id="IPR035937">
    <property type="entry name" value="MutM-like_N-ter"/>
</dbReference>
<dbReference type="InterPro" id="IPR010979">
    <property type="entry name" value="Ribosomal_uS13-like_H2TH"/>
</dbReference>
<dbReference type="InterPro" id="IPR000214">
    <property type="entry name" value="Znf_DNA_glyclase/AP_lyase"/>
</dbReference>
<dbReference type="InterPro" id="IPR010663">
    <property type="entry name" value="Znf_FPG/IleRS"/>
</dbReference>
<dbReference type="NCBIfam" id="TIGR00577">
    <property type="entry name" value="fpg"/>
    <property type="match status" value="1"/>
</dbReference>
<dbReference type="NCBIfam" id="NF002211">
    <property type="entry name" value="PRK01103.1"/>
    <property type="match status" value="1"/>
</dbReference>
<dbReference type="PANTHER" id="PTHR22993">
    <property type="entry name" value="FORMAMIDOPYRIMIDINE-DNA GLYCOSYLASE"/>
    <property type="match status" value="1"/>
</dbReference>
<dbReference type="PANTHER" id="PTHR22993:SF9">
    <property type="entry name" value="FORMAMIDOPYRIMIDINE-DNA GLYCOSYLASE"/>
    <property type="match status" value="1"/>
</dbReference>
<dbReference type="Pfam" id="PF01149">
    <property type="entry name" value="Fapy_DNA_glyco"/>
    <property type="match status" value="1"/>
</dbReference>
<dbReference type="Pfam" id="PF06831">
    <property type="entry name" value="H2TH"/>
    <property type="match status" value="1"/>
</dbReference>
<dbReference type="Pfam" id="PF06827">
    <property type="entry name" value="zf-FPG_IleRS"/>
    <property type="match status" value="1"/>
</dbReference>
<dbReference type="SMART" id="SM00898">
    <property type="entry name" value="Fapy_DNA_glyco"/>
    <property type="match status" value="1"/>
</dbReference>
<dbReference type="SMART" id="SM01232">
    <property type="entry name" value="H2TH"/>
    <property type="match status" value="1"/>
</dbReference>
<dbReference type="SUPFAM" id="SSF57716">
    <property type="entry name" value="Glucocorticoid receptor-like (DNA-binding domain)"/>
    <property type="match status" value="1"/>
</dbReference>
<dbReference type="SUPFAM" id="SSF81624">
    <property type="entry name" value="N-terminal domain of MutM-like DNA repair proteins"/>
    <property type="match status" value="1"/>
</dbReference>
<dbReference type="SUPFAM" id="SSF46946">
    <property type="entry name" value="S13-like H2TH domain"/>
    <property type="match status" value="1"/>
</dbReference>
<dbReference type="PROSITE" id="PS51068">
    <property type="entry name" value="FPG_CAT"/>
    <property type="match status" value="1"/>
</dbReference>
<dbReference type="PROSITE" id="PS01242">
    <property type="entry name" value="ZF_FPG_1"/>
    <property type="match status" value="1"/>
</dbReference>
<dbReference type="PROSITE" id="PS51066">
    <property type="entry name" value="ZF_FPG_2"/>
    <property type="match status" value="1"/>
</dbReference>
<organism>
    <name type="scientific">Yersinia pestis bv. Antiqua (strain Angola)</name>
    <dbReference type="NCBI Taxonomy" id="349746"/>
    <lineage>
        <taxon>Bacteria</taxon>
        <taxon>Pseudomonadati</taxon>
        <taxon>Pseudomonadota</taxon>
        <taxon>Gammaproteobacteria</taxon>
        <taxon>Enterobacterales</taxon>
        <taxon>Yersiniaceae</taxon>
        <taxon>Yersinia</taxon>
    </lineage>
</organism>
<protein>
    <recommendedName>
        <fullName evidence="2">Formamidopyrimidine-DNA glycosylase</fullName>
        <shortName evidence="2">Fapy-DNA glycosylase</shortName>
        <ecNumber evidence="2">3.2.2.23</ecNumber>
    </recommendedName>
    <alternativeName>
        <fullName evidence="2">DNA-(apurinic or apyrimidinic site) lyase MutM</fullName>
        <shortName evidence="2">AP lyase MutM</shortName>
        <ecNumber evidence="2">4.2.99.18</ecNumber>
    </alternativeName>
</protein>
<accession>A9R677</accession>
<evidence type="ECO:0000250" key="1"/>
<evidence type="ECO:0000255" key="2">
    <source>
        <dbReference type="HAMAP-Rule" id="MF_00103"/>
    </source>
</evidence>
<comment type="function">
    <text evidence="2">Involved in base excision repair of DNA damaged by oxidation or by mutagenic agents. Acts as a DNA glycosylase that recognizes and removes damaged bases. Has a preference for oxidized purines, such as 7,8-dihydro-8-oxoguanine (8-oxoG). Has AP (apurinic/apyrimidinic) lyase activity and introduces nicks in the DNA strand. Cleaves the DNA backbone by beta-delta elimination to generate a single-strand break at the site of the removed base with both 3'- and 5'-phosphates.</text>
</comment>
<comment type="catalytic activity">
    <reaction evidence="2">
        <text>Hydrolysis of DNA containing ring-opened 7-methylguanine residues, releasing 2,6-diamino-4-hydroxy-5-(N-methyl)formamidopyrimidine.</text>
        <dbReference type="EC" id="3.2.2.23"/>
    </reaction>
</comment>
<comment type="catalytic activity">
    <reaction evidence="2">
        <text>2'-deoxyribonucleotide-(2'-deoxyribose 5'-phosphate)-2'-deoxyribonucleotide-DNA = a 3'-end 2'-deoxyribonucleotide-(2,3-dehydro-2,3-deoxyribose 5'-phosphate)-DNA + a 5'-end 5'-phospho-2'-deoxyribonucleoside-DNA + H(+)</text>
        <dbReference type="Rhea" id="RHEA:66592"/>
        <dbReference type="Rhea" id="RHEA-COMP:13180"/>
        <dbReference type="Rhea" id="RHEA-COMP:16897"/>
        <dbReference type="Rhea" id="RHEA-COMP:17067"/>
        <dbReference type="ChEBI" id="CHEBI:15378"/>
        <dbReference type="ChEBI" id="CHEBI:136412"/>
        <dbReference type="ChEBI" id="CHEBI:157695"/>
        <dbReference type="ChEBI" id="CHEBI:167181"/>
        <dbReference type="EC" id="4.2.99.18"/>
    </reaction>
</comment>
<comment type="cofactor">
    <cofactor evidence="2">
        <name>Zn(2+)</name>
        <dbReference type="ChEBI" id="CHEBI:29105"/>
    </cofactor>
    <text evidence="2">Binds 1 zinc ion per subunit.</text>
</comment>
<comment type="subunit">
    <text evidence="2">Monomer.</text>
</comment>
<comment type="similarity">
    <text evidence="2">Belongs to the FPG family.</text>
</comment>
<sequence>MPELPEVETSRRGIEPYLVGQTILYAVVRNARLRWPVSDEILTLSDQPVLSVQRRAKYLLLELPKGWIIIHLGMSGSLRVLSEETAAEKHDHVDLVVSNGKILRYTDPRRFGAWLWAKDLETSNVLAHLGPEPLSDEFTAQYLFDKSRNKRTLIKPWLMDNKVVVGVGNIYASESLFAAGILPDRAAGSLTDAESVLLVATIKAVLLHSIEQGGTTLRDFLQSDGKPGYFAQELQVYGRAGEPCRQCGHPIEIAKHGQRSTFFCRHCQH</sequence>
<feature type="initiator methionine" description="Removed" evidence="1">
    <location>
        <position position="1"/>
    </location>
</feature>
<feature type="chain" id="PRO_1000094089" description="Formamidopyrimidine-DNA glycosylase">
    <location>
        <begin position="2"/>
        <end position="269"/>
    </location>
</feature>
<feature type="zinc finger region" description="FPG-type" evidence="2">
    <location>
        <begin position="235"/>
        <end position="269"/>
    </location>
</feature>
<feature type="active site" description="Schiff-base intermediate with DNA" evidence="2">
    <location>
        <position position="2"/>
    </location>
</feature>
<feature type="active site" description="Proton donor" evidence="2">
    <location>
        <position position="3"/>
    </location>
</feature>
<feature type="active site" description="Proton donor; for beta-elimination activity" evidence="2">
    <location>
        <position position="57"/>
    </location>
</feature>
<feature type="active site" description="Proton donor; for delta-elimination activity" evidence="2">
    <location>
        <position position="259"/>
    </location>
</feature>
<feature type="binding site" evidence="2">
    <location>
        <position position="90"/>
    </location>
    <ligand>
        <name>DNA</name>
        <dbReference type="ChEBI" id="CHEBI:16991"/>
    </ligand>
</feature>
<feature type="binding site" evidence="2">
    <location>
        <position position="109"/>
    </location>
    <ligand>
        <name>DNA</name>
        <dbReference type="ChEBI" id="CHEBI:16991"/>
    </ligand>
</feature>
<feature type="binding site" evidence="2">
    <location>
        <position position="150"/>
    </location>
    <ligand>
        <name>DNA</name>
        <dbReference type="ChEBI" id="CHEBI:16991"/>
    </ligand>
</feature>
<gene>
    <name evidence="2" type="primary">mutM</name>
    <name evidence="2" type="synonym">fpg</name>
    <name type="ordered locus">YpAngola_A0058</name>
</gene>
<proteinExistence type="inferred from homology"/>
<keyword id="KW-0227">DNA damage</keyword>
<keyword id="KW-0234">DNA repair</keyword>
<keyword id="KW-0238">DNA-binding</keyword>
<keyword id="KW-0326">Glycosidase</keyword>
<keyword id="KW-0378">Hydrolase</keyword>
<keyword id="KW-0456">Lyase</keyword>
<keyword id="KW-0479">Metal-binding</keyword>
<keyword id="KW-0511">Multifunctional enzyme</keyword>
<keyword id="KW-0862">Zinc</keyword>
<keyword id="KW-0863">Zinc-finger</keyword>